<keyword id="KW-0150">Chloroplast</keyword>
<keyword id="KW-0934">Plastid</keyword>
<keyword id="KW-0687">Ribonucleoprotein</keyword>
<keyword id="KW-0689">Ribosomal protein</keyword>
<keyword id="KW-0694">RNA-binding</keyword>
<keyword id="KW-0699">rRNA-binding</keyword>
<dbReference type="EMBL" id="DQ383815">
    <property type="protein sequence ID" value="ABD47148.1"/>
    <property type="molecule type" value="Genomic_DNA"/>
</dbReference>
<dbReference type="RefSeq" id="YP_588119.1">
    <property type="nucleotide sequence ID" value="NC_007977.1"/>
</dbReference>
<dbReference type="SMR" id="Q1KXV7"/>
<dbReference type="EnsemblPlants" id="mRNA:HanXRQr2_Chr02g0061441">
    <property type="protein sequence ID" value="CDS:HanXRQr2_Chr02g0061441.1"/>
    <property type="gene ID" value="HanXRQr2_Chr02g0061441"/>
</dbReference>
<dbReference type="GeneID" id="4055595"/>
<dbReference type="Gramene" id="mRNA:HanXRQr2_Chr02g0061441">
    <property type="protein sequence ID" value="CDS:HanXRQr2_Chr02g0061441.1"/>
    <property type="gene ID" value="HanXRQr2_Chr02g0061441"/>
</dbReference>
<dbReference type="KEGG" id="han:4055595"/>
<dbReference type="OrthoDB" id="2443at2759"/>
<dbReference type="GO" id="GO:0009507">
    <property type="term" value="C:chloroplast"/>
    <property type="evidence" value="ECO:0007669"/>
    <property type="project" value="UniProtKB-SubCell"/>
</dbReference>
<dbReference type="GO" id="GO:0015935">
    <property type="term" value="C:small ribosomal subunit"/>
    <property type="evidence" value="ECO:0007669"/>
    <property type="project" value="InterPro"/>
</dbReference>
<dbReference type="GO" id="GO:0019843">
    <property type="term" value="F:rRNA binding"/>
    <property type="evidence" value="ECO:0007669"/>
    <property type="project" value="UniProtKB-UniRule"/>
</dbReference>
<dbReference type="GO" id="GO:0003735">
    <property type="term" value="F:structural constituent of ribosome"/>
    <property type="evidence" value="ECO:0007669"/>
    <property type="project" value="InterPro"/>
</dbReference>
<dbReference type="GO" id="GO:0006412">
    <property type="term" value="P:translation"/>
    <property type="evidence" value="ECO:0007669"/>
    <property type="project" value="UniProtKB-UniRule"/>
</dbReference>
<dbReference type="CDD" id="cd00165">
    <property type="entry name" value="S4"/>
    <property type="match status" value="1"/>
</dbReference>
<dbReference type="FunFam" id="1.10.1050.10:FF:000002">
    <property type="entry name" value="30S ribosomal protein S4, chloroplastic"/>
    <property type="match status" value="1"/>
</dbReference>
<dbReference type="FunFam" id="3.10.290.10:FF:000081">
    <property type="entry name" value="30S ribosomal protein S4, chloroplastic"/>
    <property type="match status" value="1"/>
</dbReference>
<dbReference type="Gene3D" id="1.10.1050.10">
    <property type="entry name" value="Ribosomal Protein S4 Delta 41, Chain A, domain 1"/>
    <property type="match status" value="1"/>
</dbReference>
<dbReference type="Gene3D" id="3.10.290.10">
    <property type="entry name" value="RNA-binding S4 domain"/>
    <property type="match status" value="1"/>
</dbReference>
<dbReference type="HAMAP" id="MF_01306_B">
    <property type="entry name" value="Ribosomal_uS4_B"/>
    <property type="match status" value="1"/>
</dbReference>
<dbReference type="InterPro" id="IPR022801">
    <property type="entry name" value="Ribosomal_uS4"/>
</dbReference>
<dbReference type="InterPro" id="IPR005709">
    <property type="entry name" value="Ribosomal_uS4_bac-type"/>
</dbReference>
<dbReference type="InterPro" id="IPR018079">
    <property type="entry name" value="Ribosomal_uS4_CS"/>
</dbReference>
<dbReference type="InterPro" id="IPR001912">
    <property type="entry name" value="Ribosomal_uS4_N"/>
</dbReference>
<dbReference type="InterPro" id="IPR002942">
    <property type="entry name" value="S4_RNA-bd"/>
</dbReference>
<dbReference type="InterPro" id="IPR036986">
    <property type="entry name" value="S4_RNA-bd_sf"/>
</dbReference>
<dbReference type="NCBIfam" id="NF003717">
    <property type="entry name" value="PRK05327.1"/>
    <property type="match status" value="1"/>
</dbReference>
<dbReference type="NCBIfam" id="TIGR01017">
    <property type="entry name" value="rpsD_bact"/>
    <property type="match status" value="1"/>
</dbReference>
<dbReference type="PANTHER" id="PTHR11831">
    <property type="entry name" value="30S 40S RIBOSOMAL PROTEIN"/>
    <property type="match status" value="1"/>
</dbReference>
<dbReference type="PANTHER" id="PTHR11831:SF4">
    <property type="entry name" value="SMALL RIBOSOMAL SUBUNIT PROTEIN US4M"/>
    <property type="match status" value="1"/>
</dbReference>
<dbReference type="Pfam" id="PF00163">
    <property type="entry name" value="Ribosomal_S4"/>
    <property type="match status" value="1"/>
</dbReference>
<dbReference type="Pfam" id="PF01479">
    <property type="entry name" value="S4"/>
    <property type="match status" value="1"/>
</dbReference>
<dbReference type="SMART" id="SM01390">
    <property type="entry name" value="Ribosomal_S4"/>
    <property type="match status" value="1"/>
</dbReference>
<dbReference type="SMART" id="SM00363">
    <property type="entry name" value="S4"/>
    <property type="match status" value="1"/>
</dbReference>
<dbReference type="SUPFAM" id="SSF55174">
    <property type="entry name" value="Alpha-L RNA-binding motif"/>
    <property type="match status" value="1"/>
</dbReference>
<dbReference type="PROSITE" id="PS00632">
    <property type="entry name" value="RIBOSOMAL_S4"/>
    <property type="match status" value="1"/>
</dbReference>
<dbReference type="PROSITE" id="PS50889">
    <property type="entry name" value="S4"/>
    <property type="match status" value="1"/>
</dbReference>
<evidence type="ECO:0000250" key="1"/>
<evidence type="ECO:0000256" key="2">
    <source>
        <dbReference type="SAM" id="MobiDB-lite"/>
    </source>
</evidence>
<evidence type="ECO:0000305" key="3"/>
<accession>Q1KXV7</accession>
<comment type="function">
    <text evidence="1">One of the primary rRNA binding proteins, it binds directly to 16S rRNA where it nucleates assembly of the body of the 30S subunit.</text>
</comment>
<comment type="function">
    <text evidence="1">With S5 and S12 plays an important role in translational accuracy.</text>
</comment>
<comment type="subunit">
    <text evidence="1">Part of the 30S ribosomal subunit. Contacts protein S5. The interaction surface between S4 and S5 is involved in control of translational fidelity (By similarity).</text>
</comment>
<comment type="subcellular location">
    <subcellularLocation>
        <location>Plastid</location>
        <location>Chloroplast</location>
    </subcellularLocation>
</comment>
<comment type="similarity">
    <text evidence="3">Belongs to the universal ribosomal protein uS4 family.</text>
</comment>
<geneLocation type="chloroplast"/>
<reference key="1">
    <citation type="submission" date="2006-01" db="EMBL/GenBank/DDBJ databases">
        <title>A comparison of the first two published chloroplast genomes in Asteraceae: Lactuca and Helianthus.</title>
        <authorList>
            <person name="Timme R.E."/>
            <person name="Kuehl J.V."/>
            <person name="Boore J.L."/>
            <person name="Jansen R.K."/>
        </authorList>
    </citation>
    <scope>NUCLEOTIDE SEQUENCE [LARGE SCALE GENOMIC DNA]</scope>
    <source>
        <strain>cv. HA383</strain>
    </source>
</reference>
<organism>
    <name type="scientific">Helianthus annuus</name>
    <name type="common">Common sunflower</name>
    <dbReference type="NCBI Taxonomy" id="4232"/>
    <lineage>
        <taxon>Eukaryota</taxon>
        <taxon>Viridiplantae</taxon>
        <taxon>Streptophyta</taxon>
        <taxon>Embryophyta</taxon>
        <taxon>Tracheophyta</taxon>
        <taxon>Spermatophyta</taxon>
        <taxon>Magnoliopsida</taxon>
        <taxon>eudicotyledons</taxon>
        <taxon>Gunneridae</taxon>
        <taxon>Pentapetalae</taxon>
        <taxon>asterids</taxon>
        <taxon>campanulids</taxon>
        <taxon>Asterales</taxon>
        <taxon>Asteraceae</taxon>
        <taxon>Asteroideae</taxon>
        <taxon>Heliantheae alliance</taxon>
        <taxon>Heliantheae</taxon>
        <taxon>Helianthus</taxon>
    </lineage>
</organism>
<name>RR4_HELAN</name>
<feature type="chain" id="PRO_0000277011" description="Small ribosomal subunit protein uS4c">
    <location>
        <begin position="1"/>
        <end position="201"/>
    </location>
</feature>
<feature type="domain" description="S4 RNA-binding">
    <location>
        <begin position="89"/>
        <end position="149"/>
    </location>
</feature>
<feature type="region of interest" description="Disordered" evidence="2">
    <location>
        <begin position="15"/>
        <end position="44"/>
    </location>
</feature>
<proteinExistence type="inferred from homology"/>
<gene>
    <name type="primary">rps4</name>
</gene>
<protein>
    <recommendedName>
        <fullName evidence="3">Small ribosomal subunit protein uS4c</fullName>
    </recommendedName>
    <alternativeName>
        <fullName>30S ribosomal protein S4, chloroplastic</fullName>
    </alternativeName>
</protein>
<sequence>MSRYRGPRFKKIRRLGALPGLTNKRPRAGSDLRNQSRSGKKSQYRIRLEEKQKLRFHYGLTERQLLKYVRIAGKAKGSTGQVLLQLLEMRLDNILFRLGMAPTIPGARQLVNHRHILVNGRIVDIPSYRCKPRDTIAARDEQKSRALIQNSLDSSPPEELPNHLTLQPFQYKGLVNQIIDSKWVGLKINELLVVEYYSRQT</sequence>